<feature type="chain" id="PRO_1000023097" description="UDP-N-acetylglucosamine 1-carboxyvinyltransferase">
    <location>
        <begin position="1"/>
        <end position="418"/>
    </location>
</feature>
<feature type="active site" description="Proton donor" evidence="1">
    <location>
        <position position="116"/>
    </location>
</feature>
<feature type="binding site" evidence="1">
    <location>
        <begin position="22"/>
        <end position="23"/>
    </location>
    <ligand>
        <name>phosphoenolpyruvate</name>
        <dbReference type="ChEBI" id="CHEBI:58702"/>
    </ligand>
</feature>
<feature type="binding site" evidence="1">
    <location>
        <position position="92"/>
    </location>
    <ligand>
        <name>UDP-N-acetyl-alpha-D-glucosamine</name>
        <dbReference type="ChEBI" id="CHEBI:57705"/>
    </ligand>
</feature>
<feature type="binding site" evidence="1">
    <location>
        <position position="306"/>
    </location>
    <ligand>
        <name>UDP-N-acetyl-alpha-D-glucosamine</name>
        <dbReference type="ChEBI" id="CHEBI:57705"/>
    </ligand>
</feature>
<feature type="binding site" evidence="1">
    <location>
        <position position="328"/>
    </location>
    <ligand>
        <name>UDP-N-acetyl-alpha-D-glucosamine</name>
        <dbReference type="ChEBI" id="CHEBI:57705"/>
    </ligand>
</feature>
<feature type="modified residue" description="2-(S-cysteinyl)pyruvic acid O-phosphothioketal" evidence="1">
    <location>
        <position position="116"/>
    </location>
</feature>
<keyword id="KW-0131">Cell cycle</keyword>
<keyword id="KW-0132">Cell division</keyword>
<keyword id="KW-0133">Cell shape</keyword>
<keyword id="KW-0961">Cell wall biogenesis/degradation</keyword>
<keyword id="KW-0963">Cytoplasm</keyword>
<keyword id="KW-0573">Peptidoglycan synthesis</keyword>
<keyword id="KW-0670">Pyruvate</keyword>
<keyword id="KW-1185">Reference proteome</keyword>
<keyword id="KW-0808">Transferase</keyword>
<sequence>MDKLSIQSGGPLAGTVVISGAKNAALPILMAGVLAESPFVLTNVPSLRDVDTSCKLLRCLGAEVTQDGDRITIDSSRIDHFVAPYELVKTMRASILILGPLLARFGTADVSLPGGCAIGARPVNLHLHGLEQMGAKIEVKEGYIKARVDGRLKGAHIFMDMVSVGATENLLMAAALADGVTVIENAAREPEVIDLANCLVAMGAQISGIGTATLKITGVERLNGCDYRVMPDRIETGTFLVAAAVTRGRIRCENADPSSLESVLAKLEDAGAEINTGDDWIELDMHGKRPKAVNIKTAPYPAFPTDMQAQFCVLNCLAEGTGTITETIFENRFMHVPELMRMGANMELEGHTCIVHGVERLSGAQVMATDLRASASLVIAGLMADGTTLVDRIYHLDRGYEHIETKFEGLGGKVVRVK</sequence>
<dbReference type="EC" id="2.5.1.7" evidence="1"/>
<dbReference type="EMBL" id="CP000507">
    <property type="protein sequence ID" value="ABM01278.1"/>
    <property type="molecule type" value="Genomic_DNA"/>
</dbReference>
<dbReference type="RefSeq" id="WP_011761182.1">
    <property type="nucleotide sequence ID" value="NC_008700.1"/>
</dbReference>
<dbReference type="SMR" id="A1SA71"/>
<dbReference type="STRING" id="326297.Sama_3075"/>
<dbReference type="KEGG" id="saz:Sama_3075"/>
<dbReference type="eggNOG" id="COG0766">
    <property type="taxonomic scope" value="Bacteria"/>
</dbReference>
<dbReference type="HOGENOM" id="CLU_027387_0_0_6"/>
<dbReference type="OrthoDB" id="9803760at2"/>
<dbReference type="UniPathway" id="UPA00219"/>
<dbReference type="Proteomes" id="UP000009175">
    <property type="component" value="Chromosome"/>
</dbReference>
<dbReference type="GO" id="GO:0005737">
    <property type="term" value="C:cytoplasm"/>
    <property type="evidence" value="ECO:0007669"/>
    <property type="project" value="UniProtKB-SubCell"/>
</dbReference>
<dbReference type="GO" id="GO:0008760">
    <property type="term" value="F:UDP-N-acetylglucosamine 1-carboxyvinyltransferase activity"/>
    <property type="evidence" value="ECO:0007669"/>
    <property type="project" value="UniProtKB-UniRule"/>
</dbReference>
<dbReference type="GO" id="GO:0051301">
    <property type="term" value="P:cell division"/>
    <property type="evidence" value="ECO:0007669"/>
    <property type="project" value="UniProtKB-KW"/>
</dbReference>
<dbReference type="GO" id="GO:0071555">
    <property type="term" value="P:cell wall organization"/>
    <property type="evidence" value="ECO:0007669"/>
    <property type="project" value="UniProtKB-KW"/>
</dbReference>
<dbReference type="GO" id="GO:0009252">
    <property type="term" value="P:peptidoglycan biosynthetic process"/>
    <property type="evidence" value="ECO:0007669"/>
    <property type="project" value="UniProtKB-UniRule"/>
</dbReference>
<dbReference type="GO" id="GO:0008360">
    <property type="term" value="P:regulation of cell shape"/>
    <property type="evidence" value="ECO:0007669"/>
    <property type="project" value="UniProtKB-KW"/>
</dbReference>
<dbReference type="GO" id="GO:0019277">
    <property type="term" value="P:UDP-N-acetylgalactosamine biosynthetic process"/>
    <property type="evidence" value="ECO:0007669"/>
    <property type="project" value="InterPro"/>
</dbReference>
<dbReference type="CDD" id="cd01555">
    <property type="entry name" value="UdpNAET"/>
    <property type="match status" value="1"/>
</dbReference>
<dbReference type="FunFam" id="3.65.10.10:FF:000002">
    <property type="entry name" value="UDP-N-acetylglucosamine 1-carboxyvinyltransferase"/>
    <property type="match status" value="1"/>
</dbReference>
<dbReference type="Gene3D" id="3.65.10.10">
    <property type="entry name" value="Enolpyruvate transferase domain"/>
    <property type="match status" value="2"/>
</dbReference>
<dbReference type="HAMAP" id="MF_00111">
    <property type="entry name" value="MurA"/>
    <property type="match status" value="1"/>
</dbReference>
<dbReference type="InterPro" id="IPR001986">
    <property type="entry name" value="Enolpyruvate_Tfrase_dom"/>
</dbReference>
<dbReference type="InterPro" id="IPR036968">
    <property type="entry name" value="Enolpyruvate_Tfrase_sf"/>
</dbReference>
<dbReference type="InterPro" id="IPR050068">
    <property type="entry name" value="MurA_subfamily"/>
</dbReference>
<dbReference type="InterPro" id="IPR013792">
    <property type="entry name" value="RNA3'P_cycl/enolpyr_Trfase_a/b"/>
</dbReference>
<dbReference type="InterPro" id="IPR005750">
    <property type="entry name" value="UDP_GlcNAc_COvinyl_MurA"/>
</dbReference>
<dbReference type="NCBIfam" id="TIGR01072">
    <property type="entry name" value="murA"/>
    <property type="match status" value="1"/>
</dbReference>
<dbReference type="NCBIfam" id="NF006873">
    <property type="entry name" value="PRK09369.1"/>
    <property type="match status" value="1"/>
</dbReference>
<dbReference type="PANTHER" id="PTHR43783">
    <property type="entry name" value="UDP-N-ACETYLGLUCOSAMINE 1-CARBOXYVINYLTRANSFERASE"/>
    <property type="match status" value="1"/>
</dbReference>
<dbReference type="PANTHER" id="PTHR43783:SF1">
    <property type="entry name" value="UDP-N-ACETYLGLUCOSAMINE 1-CARBOXYVINYLTRANSFERASE"/>
    <property type="match status" value="1"/>
</dbReference>
<dbReference type="Pfam" id="PF00275">
    <property type="entry name" value="EPSP_synthase"/>
    <property type="match status" value="1"/>
</dbReference>
<dbReference type="SUPFAM" id="SSF55205">
    <property type="entry name" value="EPT/RTPC-like"/>
    <property type="match status" value="1"/>
</dbReference>
<accession>A1SA71</accession>
<protein>
    <recommendedName>
        <fullName evidence="1">UDP-N-acetylglucosamine 1-carboxyvinyltransferase</fullName>
        <ecNumber evidence="1">2.5.1.7</ecNumber>
    </recommendedName>
    <alternativeName>
        <fullName evidence="1">Enoylpyruvate transferase</fullName>
    </alternativeName>
    <alternativeName>
        <fullName evidence="1">UDP-N-acetylglucosamine enolpyruvyl transferase</fullName>
        <shortName evidence="1">EPT</shortName>
    </alternativeName>
</protein>
<reference key="1">
    <citation type="submission" date="2006-12" db="EMBL/GenBank/DDBJ databases">
        <title>Complete sequence of Shewanella amazonensis SB2B.</title>
        <authorList>
            <consortium name="US DOE Joint Genome Institute"/>
            <person name="Copeland A."/>
            <person name="Lucas S."/>
            <person name="Lapidus A."/>
            <person name="Barry K."/>
            <person name="Detter J.C."/>
            <person name="Glavina del Rio T."/>
            <person name="Hammon N."/>
            <person name="Israni S."/>
            <person name="Dalin E."/>
            <person name="Tice H."/>
            <person name="Pitluck S."/>
            <person name="Munk A.C."/>
            <person name="Brettin T."/>
            <person name="Bruce D."/>
            <person name="Han C."/>
            <person name="Tapia R."/>
            <person name="Gilna P."/>
            <person name="Schmutz J."/>
            <person name="Larimer F."/>
            <person name="Land M."/>
            <person name="Hauser L."/>
            <person name="Kyrpides N."/>
            <person name="Mikhailova N."/>
            <person name="Fredrickson J."/>
            <person name="Richardson P."/>
        </authorList>
    </citation>
    <scope>NUCLEOTIDE SEQUENCE [LARGE SCALE GENOMIC DNA]</scope>
    <source>
        <strain>ATCC BAA-1098 / SB2B</strain>
    </source>
</reference>
<gene>
    <name evidence="1" type="primary">murA</name>
    <name type="ordered locus">Sama_3075</name>
</gene>
<organism>
    <name type="scientific">Shewanella amazonensis (strain ATCC BAA-1098 / SB2B)</name>
    <dbReference type="NCBI Taxonomy" id="326297"/>
    <lineage>
        <taxon>Bacteria</taxon>
        <taxon>Pseudomonadati</taxon>
        <taxon>Pseudomonadota</taxon>
        <taxon>Gammaproteobacteria</taxon>
        <taxon>Alteromonadales</taxon>
        <taxon>Shewanellaceae</taxon>
        <taxon>Shewanella</taxon>
    </lineage>
</organism>
<evidence type="ECO:0000255" key="1">
    <source>
        <dbReference type="HAMAP-Rule" id="MF_00111"/>
    </source>
</evidence>
<comment type="function">
    <text evidence="1">Cell wall formation. Adds enolpyruvyl to UDP-N-acetylglucosamine.</text>
</comment>
<comment type="catalytic activity">
    <reaction evidence="1">
        <text>phosphoenolpyruvate + UDP-N-acetyl-alpha-D-glucosamine = UDP-N-acetyl-3-O-(1-carboxyvinyl)-alpha-D-glucosamine + phosphate</text>
        <dbReference type="Rhea" id="RHEA:18681"/>
        <dbReference type="ChEBI" id="CHEBI:43474"/>
        <dbReference type="ChEBI" id="CHEBI:57705"/>
        <dbReference type="ChEBI" id="CHEBI:58702"/>
        <dbReference type="ChEBI" id="CHEBI:68483"/>
        <dbReference type="EC" id="2.5.1.7"/>
    </reaction>
</comment>
<comment type="pathway">
    <text evidence="1">Cell wall biogenesis; peptidoglycan biosynthesis.</text>
</comment>
<comment type="subcellular location">
    <subcellularLocation>
        <location evidence="1">Cytoplasm</location>
    </subcellularLocation>
</comment>
<comment type="similarity">
    <text evidence="1">Belongs to the EPSP synthase family. MurA subfamily.</text>
</comment>
<name>MURA_SHEAM</name>
<proteinExistence type="inferred from homology"/>